<comment type="function">
    <text evidence="1">Allows the formation of correctly charged Gln-tRNA(Gln) through the transamidation of misacylated Glu-tRNA(Gln) in organisms which lack glutaminyl-tRNA synthetase. The reaction takes place in the presence of glutamine and ATP through an activated gamma-phospho-Glu-tRNA(Gln).</text>
</comment>
<comment type="catalytic activity">
    <reaction evidence="1">
        <text>L-glutamyl-tRNA(Gln) + L-glutamine + ATP + H2O = L-glutaminyl-tRNA(Gln) + L-glutamate + ADP + phosphate + H(+)</text>
        <dbReference type="Rhea" id="RHEA:17521"/>
        <dbReference type="Rhea" id="RHEA-COMP:9681"/>
        <dbReference type="Rhea" id="RHEA-COMP:9684"/>
        <dbReference type="ChEBI" id="CHEBI:15377"/>
        <dbReference type="ChEBI" id="CHEBI:15378"/>
        <dbReference type="ChEBI" id="CHEBI:29985"/>
        <dbReference type="ChEBI" id="CHEBI:30616"/>
        <dbReference type="ChEBI" id="CHEBI:43474"/>
        <dbReference type="ChEBI" id="CHEBI:58359"/>
        <dbReference type="ChEBI" id="CHEBI:78520"/>
        <dbReference type="ChEBI" id="CHEBI:78521"/>
        <dbReference type="ChEBI" id="CHEBI:456216"/>
        <dbReference type="EC" id="6.3.5.7"/>
    </reaction>
</comment>
<comment type="subunit">
    <text evidence="1">Heterotrimer of A, B and C subunits.</text>
</comment>
<comment type="similarity">
    <text evidence="1">Belongs to the amidase family. GatA subfamily.</text>
</comment>
<accession>A7NKM0</accession>
<feature type="chain" id="PRO_1000203044" description="Glutamyl-tRNA(Gln) amidotransferase subunit A">
    <location>
        <begin position="1"/>
        <end position="490"/>
    </location>
</feature>
<feature type="active site" description="Charge relay system" evidence="1">
    <location>
        <position position="79"/>
    </location>
</feature>
<feature type="active site" description="Charge relay system" evidence="1">
    <location>
        <position position="154"/>
    </location>
</feature>
<feature type="active site" description="Acyl-ester intermediate" evidence="1">
    <location>
        <position position="178"/>
    </location>
</feature>
<evidence type="ECO:0000255" key="1">
    <source>
        <dbReference type="HAMAP-Rule" id="MF_00120"/>
    </source>
</evidence>
<protein>
    <recommendedName>
        <fullName evidence="1">Glutamyl-tRNA(Gln) amidotransferase subunit A</fullName>
        <shortName evidence="1">Glu-ADT subunit A</shortName>
        <ecNumber evidence="1">6.3.5.7</ecNumber>
    </recommendedName>
</protein>
<name>GATA_ROSCS</name>
<dbReference type="EC" id="6.3.5.7" evidence="1"/>
<dbReference type="EMBL" id="CP000804">
    <property type="protein sequence ID" value="ABU58040.1"/>
    <property type="molecule type" value="Genomic_DNA"/>
</dbReference>
<dbReference type="RefSeq" id="WP_012120464.1">
    <property type="nucleotide sequence ID" value="NC_009767.1"/>
</dbReference>
<dbReference type="SMR" id="A7NKM0"/>
<dbReference type="STRING" id="383372.Rcas_1951"/>
<dbReference type="KEGG" id="rca:Rcas_1951"/>
<dbReference type="eggNOG" id="COG0154">
    <property type="taxonomic scope" value="Bacteria"/>
</dbReference>
<dbReference type="HOGENOM" id="CLU_009600_0_3_0"/>
<dbReference type="OrthoDB" id="9811471at2"/>
<dbReference type="Proteomes" id="UP000000263">
    <property type="component" value="Chromosome"/>
</dbReference>
<dbReference type="GO" id="GO:0030956">
    <property type="term" value="C:glutamyl-tRNA(Gln) amidotransferase complex"/>
    <property type="evidence" value="ECO:0007669"/>
    <property type="project" value="InterPro"/>
</dbReference>
<dbReference type="GO" id="GO:0005524">
    <property type="term" value="F:ATP binding"/>
    <property type="evidence" value="ECO:0007669"/>
    <property type="project" value="UniProtKB-KW"/>
</dbReference>
<dbReference type="GO" id="GO:0050567">
    <property type="term" value="F:glutaminyl-tRNA synthase (glutamine-hydrolyzing) activity"/>
    <property type="evidence" value="ECO:0007669"/>
    <property type="project" value="UniProtKB-UniRule"/>
</dbReference>
<dbReference type="GO" id="GO:0006412">
    <property type="term" value="P:translation"/>
    <property type="evidence" value="ECO:0007669"/>
    <property type="project" value="UniProtKB-UniRule"/>
</dbReference>
<dbReference type="Gene3D" id="3.90.1300.10">
    <property type="entry name" value="Amidase signature (AS) domain"/>
    <property type="match status" value="1"/>
</dbReference>
<dbReference type="HAMAP" id="MF_00120">
    <property type="entry name" value="GatA"/>
    <property type="match status" value="1"/>
</dbReference>
<dbReference type="InterPro" id="IPR000120">
    <property type="entry name" value="Amidase"/>
</dbReference>
<dbReference type="InterPro" id="IPR020556">
    <property type="entry name" value="Amidase_CS"/>
</dbReference>
<dbReference type="InterPro" id="IPR023631">
    <property type="entry name" value="Amidase_dom"/>
</dbReference>
<dbReference type="InterPro" id="IPR036928">
    <property type="entry name" value="AS_sf"/>
</dbReference>
<dbReference type="InterPro" id="IPR004412">
    <property type="entry name" value="GatA"/>
</dbReference>
<dbReference type="NCBIfam" id="TIGR00132">
    <property type="entry name" value="gatA"/>
    <property type="match status" value="1"/>
</dbReference>
<dbReference type="PANTHER" id="PTHR11895:SF151">
    <property type="entry name" value="GLUTAMYL-TRNA(GLN) AMIDOTRANSFERASE SUBUNIT A"/>
    <property type="match status" value="1"/>
</dbReference>
<dbReference type="PANTHER" id="PTHR11895">
    <property type="entry name" value="TRANSAMIDASE"/>
    <property type="match status" value="1"/>
</dbReference>
<dbReference type="Pfam" id="PF01425">
    <property type="entry name" value="Amidase"/>
    <property type="match status" value="1"/>
</dbReference>
<dbReference type="PIRSF" id="PIRSF001221">
    <property type="entry name" value="Amidase_fungi"/>
    <property type="match status" value="1"/>
</dbReference>
<dbReference type="SUPFAM" id="SSF75304">
    <property type="entry name" value="Amidase signature (AS) enzymes"/>
    <property type="match status" value="1"/>
</dbReference>
<dbReference type="PROSITE" id="PS00571">
    <property type="entry name" value="AMIDASES"/>
    <property type="match status" value="1"/>
</dbReference>
<sequence>MTPLYQLTVAQAREMLARGEISSLELTDALLTRIAAVEPKVRAFLVVDAAGARAQARAADARRAAGDASPLLGIPMGIKDVISTQGLRTTCASKMLENYTPVYDATAVARLKAAGAVILGKLNCDEFAMGSSTENSAFQQTRNPWNLERVPGGSSGGSAAAVAAGEAPAALGTDTGGSIRQPAALCGITGLKPTYGRVSRYGLVAFASSLDQIGPMARTVRDCAIVLRVIAGADPFDATCTDYPAPDYEAALTGDIRGLRIGVPREYFVAGMQPDVEAAVRTAIEVLREQGAEVCEISLPHTPYALPVYYLIAPAEASANLARFDGVRYGLRVPGESYFDELERTRGAGFGPEVRRRIMLGTYALSAGYYDAYYKRAQQVRTLIRRDYQQAFEQVDVIAAPTTPTVAFKIGAHTDDPLAMYLEDVCTLPLNLAGLPGLVVPCGFAEGLPIGLQLIGRAFDEESLLRVGDAYQRVTDWHTRMPEVREDGSA</sequence>
<gene>
    <name evidence="1" type="primary">gatA</name>
    <name type="ordered locus">Rcas_1951</name>
</gene>
<proteinExistence type="inferred from homology"/>
<organism>
    <name type="scientific">Roseiflexus castenholzii (strain DSM 13941 / HLO8)</name>
    <dbReference type="NCBI Taxonomy" id="383372"/>
    <lineage>
        <taxon>Bacteria</taxon>
        <taxon>Bacillati</taxon>
        <taxon>Chloroflexota</taxon>
        <taxon>Chloroflexia</taxon>
        <taxon>Chloroflexales</taxon>
        <taxon>Roseiflexineae</taxon>
        <taxon>Roseiflexaceae</taxon>
        <taxon>Roseiflexus</taxon>
    </lineage>
</organism>
<reference key="1">
    <citation type="submission" date="2007-08" db="EMBL/GenBank/DDBJ databases">
        <title>Complete sequence of Roseiflexus castenholzii DSM 13941.</title>
        <authorList>
            <consortium name="US DOE Joint Genome Institute"/>
            <person name="Copeland A."/>
            <person name="Lucas S."/>
            <person name="Lapidus A."/>
            <person name="Barry K."/>
            <person name="Glavina del Rio T."/>
            <person name="Dalin E."/>
            <person name="Tice H."/>
            <person name="Pitluck S."/>
            <person name="Thompson L.S."/>
            <person name="Brettin T."/>
            <person name="Bruce D."/>
            <person name="Detter J.C."/>
            <person name="Han C."/>
            <person name="Tapia R."/>
            <person name="Schmutz J."/>
            <person name="Larimer F."/>
            <person name="Land M."/>
            <person name="Hauser L."/>
            <person name="Kyrpides N."/>
            <person name="Mikhailova N."/>
            <person name="Bryant D.A."/>
            <person name="Hanada S."/>
            <person name="Tsukatani Y."/>
            <person name="Richardson P."/>
        </authorList>
    </citation>
    <scope>NUCLEOTIDE SEQUENCE [LARGE SCALE GENOMIC DNA]</scope>
    <source>
        <strain>DSM 13941 / HLO8</strain>
    </source>
</reference>
<keyword id="KW-0067">ATP-binding</keyword>
<keyword id="KW-0436">Ligase</keyword>
<keyword id="KW-0547">Nucleotide-binding</keyword>
<keyword id="KW-0648">Protein biosynthesis</keyword>
<keyword id="KW-1185">Reference proteome</keyword>